<protein>
    <recommendedName>
        <fullName evidence="1">Small ribosomal subunit protein bS6</fullName>
    </recommendedName>
    <alternativeName>
        <fullName evidence="3">30S ribosomal protein S6</fullName>
    </alternativeName>
</protein>
<evidence type="ECO:0000255" key="1">
    <source>
        <dbReference type="HAMAP-Rule" id="MF_00360"/>
    </source>
</evidence>
<evidence type="ECO:0000256" key="2">
    <source>
        <dbReference type="SAM" id="MobiDB-lite"/>
    </source>
</evidence>
<evidence type="ECO:0000305" key="3"/>
<reference key="1">
    <citation type="journal article" date="2001" name="Proc. Natl. Acad. Sci. U.S.A.">
        <title>Complete genome sequence of Caulobacter crescentus.</title>
        <authorList>
            <person name="Nierman W.C."/>
            <person name="Feldblyum T.V."/>
            <person name="Laub M.T."/>
            <person name="Paulsen I.T."/>
            <person name="Nelson K.E."/>
            <person name="Eisen J.A."/>
            <person name="Heidelberg J.F."/>
            <person name="Alley M.R.K."/>
            <person name="Ohta N."/>
            <person name="Maddock J.R."/>
            <person name="Potocka I."/>
            <person name="Nelson W.C."/>
            <person name="Newton A."/>
            <person name="Stephens C."/>
            <person name="Phadke N.D."/>
            <person name="Ely B."/>
            <person name="DeBoy R.T."/>
            <person name="Dodson R.J."/>
            <person name="Durkin A.S."/>
            <person name="Gwinn M.L."/>
            <person name="Haft D.H."/>
            <person name="Kolonay J.F."/>
            <person name="Smit J."/>
            <person name="Craven M.B."/>
            <person name="Khouri H.M."/>
            <person name="Shetty J."/>
            <person name="Berry K.J."/>
            <person name="Utterback T.R."/>
            <person name="Tran K."/>
            <person name="Wolf A.M."/>
            <person name="Vamathevan J.J."/>
            <person name="Ermolaeva M.D."/>
            <person name="White O."/>
            <person name="Salzberg S.L."/>
            <person name="Venter J.C."/>
            <person name="Shapiro L."/>
            <person name="Fraser C.M."/>
        </authorList>
    </citation>
    <scope>NUCLEOTIDE SEQUENCE [LARGE SCALE GENOMIC DNA]</scope>
    <source>
        <strain>ATCC 19089 / CIP 103742 / CB 15</strain>
    </source>
</reference>
<organism>
    <name type="scientific">Caulobacter vibrioides (strain ATCC 19089 / CIP 103742 / CB 15)</name>
    <name type="common">Caulobacter crescentus</name>
    <dbReference type="NCBI Taxonomy" id="190650"/>
    <lineage>
        <taxon>Bacteria</taxon>
        <taxon>Pseudomonadati</taxon>
        <taxon>Pseudomonadota</taxon>
        <taxon>Alphaproteobacteria</taxon>
        <taxon>Caulobacterales</taxon>
        <taxon>Caulobacteraceae</taxon>
        <taxon>Caulobacter</taxon>
    </lineage>
</organism>
<sequence length="126" mass="14565">MAFYEHVVIARQDISPQQAEALNEQLKALIEENGGHIAKIEYWGLRNLTYRIKKNRKGHYSLLAIDAPAPAVKEMERQLLINEDVLRFMTIRVEELDLELSPVLARRDRGDRPERPREDFGAQAQA</sequence>
<comment type="function">
    <text evidence="1">Binds together with bS18 to 16S ribosomal RNA.</text>
</comment>
<comment type="similarity">
    <text evidence="1">Belongs to the bacterial ribosomal protein bS6 family.</text>
</comment>
<feature type="chain" id="PRO_0000176748" description="Small ribosomal subunit protein bS6">
    <location>
        <begin position="1"/>
        <end position="126"/>
    </location>
</feature>
<feature type="region of interest" description="Disordered" evidence="2">
    <location>
        <begin position="104"/>
        <end position="126"/>
    </location>
</feature>
<feature type="compositionally biased region" description="Basic and acidic residues" evidence="2">
    <location>
        <begin position="105"/>
        <end position="120"/>
    </location>
</feature>
<proteinExistence type="inferred from homology"/>
<gene>
    <name evidence="1" type="primary">rpsF</name>
    <name type="ordered locus">CC_1669</name>
</gene>
<keyword id="KW-1185">Reference proteome</keyword>
<keyword id="KW-0687">Ribonucleoprotein</keyword>
<keyword id="KW-0689">Ribosomal protein</keyword>
<keyword id="KW-0694">RNA-binding</keyword>
<keyword id="KW-0699">rRNA-binding</keyword>
<accession>Q9A7Q1</accession>
<dbReference type="EMBL" id="AE005673">
    <property type="protein sequence ID" value="AAK23647.1"/>
    <property type="molecule type" value="Genomic_DNA"/>
</dbReference>
<dbReference type="PIR" id="C87456">
    <property type="entry name" value="C87456"/>
</dbReference>
<dbReference type="RefSeq" id="NP_420479.1">
    <property type="nucleotide sequence ID" value="NC_002696.2"/>
</dbReference>
<dbReference type="RefSeq" id="WP_010919541.1">
    <property type="nucleotide sequence ID" value="NC_002696.2"/>
</dbReference>
<dbReference type="SMR" id="Q9A7Q1"/>
<dbReference type="STRING" id="190650.CC_1669"/>
<dbReference type="EnsemblBacteria" id="AAK23647">
    <property type="protein sequence ID" value="AAK23647"/>
    <property type="gene ID" value="CC_1669"/>
</dbReference>
<dbReference type="KEGG" id="ccr:CC_1669"/>
<dbReference type="PATRIC" id="fig|190650.5.peg.1698"/>
<dbReference type="eggNOG" id="COG0360">
    <property type="taxonomic scope" value="Bacteria"/>
</dbReference>
<dbReference type="HOGENOM" id="CLU_113441_2_0_5"/>
<dbReference type="BioCyc" id="CAULO:CC1669-MONOMER"/>
<dbReference type="Proteomes" id="UP000001816">
    <property type="component" value="Chromosome"/>
</dbReference>
<dbReference type="GO" id="GO:0022627">
    <property type="term" value="C:cytosolic small ribosomal subunit"/>
    <property type="evidence" value="ECO:0007669"/>
    <property type="project" value="TreeGrafter"/>
</dbReference>
<dbReference type="GO" id="GO:0070181">
    <property type="term" value="F:small ribosomal subunit rRNA binding"/>
    <property type="evidence" value="ECO:0007669"/>
    <property type="project" value="TreeGrafter"/>
</dbReference>
<dbReference type="GO" id="GO:0003735">
    <property type="term" value="F:structural constituent of ribosome"/>
    <property type="evidence" value="ECO:0007669"/>
    <property type="project" value="InterPro"/>
</dbReference>
<dbReference type="GO" id="GO:0006412">
    <property type="term" value="P:translation"/>
    <property type="evidence" value="ECO:0007669"/>
    <property type="project" value="UniProtKB-UniRule"/>
</dbReference>
<dbReference type="CDD" id="cd00473">
    <property type="entry name" value="bS6"/>
    <property type="match status" value="1"/>
</dbReference>
<dbReference type="Gene3D" id="3.30.70.60">
    <property type="match status" value="1"/>
</dbReference>
<dbReference type="HAMAP" id="MF_00360">
    <property type="entry name" value="Ribosomal_bS6"/>
    <property type="match status" value="1"/>
</dbReference>
<dbReference type="InterPro" id="IPR000529">
    <property type="entry name" value="Ribosomal_bS6"/>
</dbReference>
<dbReference type="InterPro" id="IPR035980">
    <property type="entry name" value="Ribosomal_bS6_sf"/>
</dbReference>
<dbReference type="InterPro" id="IPR020814">
    <property type="entry name" value="Ribosomal_S6_plastid/chlpt"/>
</dbReference>
<dbReference type="InterPro" id="IPR014717">
    <property type="entry name" value="Transl_elong_EF1B/ribsomal_bS6"/>
</dbReference>
<dbReference type="NCBIfam" id="TIGR00166">
    <property type="entry name" value="S6"/>
    <property type="match status" value="1"/>
</dbReference>
<dbReference type="PANTHER" id="PTHR21011">
    <property type="entry name" value="MITOCHONDRIAL 28S RIBOSOMAL PROTEIN S6"/>
    <property type="match status" value="1"/>
</dbReference>
<dbReference type="PANTHER" id="PTHR21011:SF1">
    <property type="entry name" value="SMALL RIBOSOMAL SUBUNIT PROTEIN BS6M"/>
    <property type="match status" value="1"/>
</dbReference>
<dbReference type="Pfam" id="PF01250">
    <property type="entry name" value="Ribosomal_S6"/>
    <property type="match status" value="1"/>
</dbReference>
<dbReference type="SUPFAM" id="SSF54995">
    <property type="entry name" value="Ribosomal protein S6"/>
    <property type="match status" value="1"/>
</dbReference>
<name>RS6_CAUVC</name>